<keyword id="KW-0143">Chaperone</keyword>
<keyword id="KW-0963">Cytoplasm</keyword>
<keyword id="KW-0346">Stress response</keyword>
<reference key="1">
    <citation type="submission" date="1999-12" db="EMBL/GenBank/DDBJ databases">
        <title>DnaK from marine bacterium Vibrio proteolyticus: novel dnaK locus organization and the protein characterization.</title>
        <authorList>
            <person name="Galkin A."/>
            <person name="Yoshimune K."/>
            <person name="Kulakova L."/>
            <person name="Yoshimura T."/>
            <person name="Esaki N."/>
        </authorList>
    </citation>
    <scope>NUCLEOTIDE SEQUENCE [GENOMIC DNA]</scope>
</reference>
<proteinExistence type="inferred from homology"/>
<organism>
    <name type="scientific">Vibrio proteolyticus</name>
    <name type="common">Aeromonas proteolytica</name>
    <dbReference type="NCBI Taxonomy" id="671"/>
    <lineage>
        <taxon>Bacteria</taxon>
        <taxon>Pseudomonadati</taxon>
        <taxon>Pseudomonadota</taxon>
        <taxon>Gammaproteobacteria</taxon>
        <taxon>Vibrionales</taxon>
        <taxon>Vibrionaceae</taxon>
        <taxon>Vibrio</taxon>
    </lineage>
</organism>
<name>GRPE_VIBPR</name>
<sequence length="204" mass="22985">MSNQEKKMHEEELQQQETVEADTEAEAEAVGTDADIEWNEESALDETEAKIAQLEAALLSSEAKVKEQQDAVLRAKAEVENMRRRTEQEIDKARKFALNKFAEELLPIIDNLERAIQAADTESEVVQPILEGITLTHKTFIDTISKFGLKEINPEGEAFNPELHQAMSIQESADHESNTVMFVMQKGYELNGRVIRPAMVMVAK</sequence>
<accession>Q9L7Z3</accession>
<evidence type="ECO:0000255" key="1">
    <source>
        <dbReference type="HAMAP-Rule" id="MF_01151"/>
    </source>
</evidence>
<evidence type="ECO:0000256" key="2">
    <source>
        <dbReference type="SAM" id="MobiDB-lite"/>
    </source>
</evidence>
<gene>
    <name evidence="1" type="primary">grpE</name>
</gene>
<protein>
    <recommendedName>
        <fullName evidence="1">Protein GrpE</fullName>
    </recommendedName>
    <alternativeName>
        <fullName evidence="1">HSP-70 cofactor</fullName>
    </alternativeName>
</protein>
<feature type="chain" id="PRO_0000113894" description="Protein GrpE">
    <location>
        <begin position="1"/>
        <end position="204"/>
    </location>
</feature>
<feature type="region of interest" description="Disordered" evidence="2">
    <location>
        <begin position="1"/>
        <end position="37"/>
    </location>
</feature>
<feature type="compositionally biased region" description="Basic and acidic residues" evidence="2">
    <location>
        <begin position="1"/>
        <end position="12"/>
    </location>
</feature>
<comment type="function">
    <text evidence="1">Participates actively in the response to hyperosmotic and heat shock by preventing the aggregation of stress-denatured proteins, in association with DnaK and GrpE. It is the nucleotide exchange factor for DnaK and may function as a thermosensor. Unfolded proteins bind initially to DnaJ; upon interaction with the DnaJ-bound protein, DnaK hydrolyzes its bound ATP, resulting in the formation of a stable complex. GrpE releases ADP from DnaK; ATP binding to DnaK triggers the release of the substrate protein, thus completing the reaction cycle. Several rounds of ATP-dependent interactions between DnaJ, DnaK and GrpE are required for fully efficient folding.</text>
</comment>
<comment type="subunit">
    <text evidence="1">Homodimer.</text>
</comment>
<comment type="subcellular location">
    <subcellularLocation>
        <location evidence="1">Cytoplasm</location>
    </subcellularLocation>
</comment>
<comment type="similarity">
    <text evidence="1">Belongs to the GrpE family.</text>
</comment>
<dbReference type="EMBL" id="AF218211">
    <property type="protein sequence ID" value="AAF27646.1"/>
    <property type="molecule type" value="Genomic_DNA"/>
</dbReference>
<dbReference type="RefSeq" id="WP_021706633.1">
    <property type="nucleotide sequence ID" value="NZ_BAABTA010000007.1"/>
</dbReference>
<dbReference type="SMR" id="Q9L7Z3"/>
<dbReference type="GO" id="GO:0005829">
    <property type="term" value="C:cytosol"/>
    <property type="evidence" value="ECO:0007669"/>
    <property type="project" value="TreeGrafter"/>
</dbReference>
<dbReference type="GO" id="GO:0000774">
    <property type="term" value="F:adenyl-nucleotide exchange factor activity"/>
    <property type="evidence" value="ECO:0007669"/>
    <property type="project" value="InterPro"/>
</dbReference>
<dbReference type="GO" id="GO:0042803">
    <property type="term" value="F:protein homodimerization activity"/>
    <property type="evidence" value="ECO:0007669"/>
    <property type="project" value="InterPro"/>
</dbReference>
<dbReference type="GO" id="GO:0051087">
    <property type="term" value="F:protein-folding chaperone binding"/>
    <property type="evidence" value="ECO:0007669"/>
    <property type="project" value="InterPro"/>
</dbReference>
<dbReference type="GO" id="GO:0051082">
    <property type="term" value="F:unfolded protein binding"/>
    <property type="evidence" value="ECO:0007669"/>
    <property type="project" value="TreeGrafter"/>
</dbReference>
<dbReference type="GO" id="GO:0006457">
    <property type="term" value="P:protein folding"/>
    <property type="evidence" value="ECO:0007669"/>
    <property type="project" value="InterPro"/>
</dbReference>
<dbReference type="CDD" id="cd00446">
    <property type="entry name" value="GrpE"/>
    <property type="match status" value="1"/>
</dbReference>
<dbReference type="FunFam" id="2.30.22.10:FF:000001">
    <property type="entry name" value="Protein GrpE"/>
    <property type="match status" value="1"/>
</dbReference>
<dbReference type="Gene3D" id="3.90.20.20">
    <property type="match status" value="1"/>
</dbReference>
<dbReference type="Gene3D" id="2.30.22.10">
    <property type="entry name" value="Head domain of nucleotide exchange factor GrpE"/>
    <property type="match status" value="1"/>
</dbReference>
<dbReference type="HAMAP" id="MF_01151">
    <property type="entry name" value="GrpE"/>
    <property type="match status" value="1"/>
</dbReference>
<dbReference type="InterPro" id="IPR000740">
    <property type="entry name" value="GrpE"/>
</dbReference>
<dbReference type="InterPro" id="IPR013805">
    <property type="entry name" value="GrpE_coiled_coil"/>
</dbReference>
<dbReference type="InterPro" id="IPR009012">
    <property type="entry name" value="GrpE_head"/>
</dbReference>
<dbReference type="NCBIfam" id="NF010737">
    <property type="entry name" value="PRK14139.1"/>
    <property type="match status" value="1"/>
</dbReference>
<dbReference type="NCBIfam" id="NF010738">
    <property type="entry name" value="PRK14140.1"/>
    <property type="match status" value="1"/>
</dbReference>
<dbReference type="NCBIfam" id="NF010748">
    <property type="entry name" value="PRK14150.1"/>
    <property type="match status" value="1"/>
</dbReference>
<dbReference type="PANTHER" id="PTHR21237">
    <property type="entry name" value="GRPE PROTEIN"/>
    <property type="match status" value="1"/>
</dbReference>
<dbReference type="PANTHER" id="PTHR21237:SF23">
    <property type="entry name" value="GRPE PROTEIN HOMOLOG, MITOCHONDRIAL"/>
    <property type="match status" value="1"/>
</dbReference>
<dbReference type="Pfam" id="PF01025">
    <property type="entry name" value="GrpE"/>
    <property type="match status" value="1"/>
</dbReference>
<dbReference type="PRINTS" id="PR00773">
    <property type="entry name" value="GRPEPROTEIN"/>
</dbReference>
<dbReference type="SUPFAM" id="SSF58014">
    <property type="entry name" value="Coiled-coil domain of nucleotide exchange factor GrpE"/>
    <property type="match status" value="1"/>
</dbReference>
<dbReference type="SUPFAM" id="SSF51064">
    <property type="entry name" value="Head domain of nucleotide exchange factor GrpE"/>
    <property type="match status" value="1"/>
</dbReference>
<dbReference type="PROSITE" id="PS01071">
    <property type="entry name" value="GRPE"/>
    <property type="match status" value="1"/>
</dbReference>